<organism>
    <name type="scientific">Arabidopsis thaliana</name>
    <name type="common">Mouse-ear cress</name>
    <dbReference type="NCBI Taxonomy" id="3702"/>
    <lineage>
        <taxon>Eukaryota</taxon>
        <taxon>Viridiplantae</taxon>
        <taxon>Streptophyta</taxon>
        <taxon>Embryophyta</taxon>
        <taxon>Tracheophyta</taxon>
        <taxon>Spermatophyta</taxon>
        <taxon>Magnoliopsida</taxon>
        <taxon>eudicotyledons</taxon>
        <taxon>Gunneridae</taxon>
        <taxon>Pentapetalae</taxon>
        <taxon>rosids</taxon>
        <taxon>malvids</taxon>
        <taxon>Brassicales</taxon>
        <taxon>Brassicaceae</taxon>
        <taxon>Camelineae</taxon>
        <taxon>Arabidopsis</taxon>
    </lineage>
</organism>
<proteinExistence type="evidence at protein level"/>
<keyword id="KW-1003">Cell membrane</keyword>
<keyword id="KW-0968">Cytoplasmic vesicle</keyword>
<keyword id="KW-0472">Membrane</keyword>
<keyword id="KW-1185">Reference proteome</keyword>
<keyword id="KW-0813">Transport</keyword>
<keyword id="KW-0832">Ubl conjugation</keyword>
<sequence>MAENGEEKLLAVARHIAKTLGHNESMADDILQIFSNFDGRFSREKLAEGQAGEDGSGVATLERALNSIDGQISRFVAADQPIWADPADSAAFLDTIDELVAIIREWSPMASEKPIGICLTRADDMMQQAMFRIEEEFRSLMERGAESFGLNPQGDAGAMNHRFDSEEEEDDDRDFNNGDDIQIPVAQPLTDYDLIIDALPSATINDLHEMAKRMLGAGFGKACSHVYSSCRREFLEESMSRLGLQKLSIEEVHKMPWQELEDEIDRWIKAANVALRILFPSERRLCDRVFFGFSSAADLSFMEVCRGSTIQLLNFADAIAIGSRSPERLFKVLDVFETMRDLMPEFESVFSDQFCSVLRNEAVTIWKRLGEAIRGIFMELENLIRRDPAKAAVPGGGLHPITRYVMNYLRAACRSRQTLEQVFEESNGVPSKDSTLLTVQMSWIMELLESNLEVKSKVYKDPALCYVFLMNNGRYIVQKVKDGDLGLLLGDDWIRKHNVKVKQYHMNYQRSSWNKMLGLLKVDNTAAGMNGLGKTMKEKLKQFNIQFDEICKVHSTWVVFDEQLKEELKISLARLLVPAYGSFIGRFQNLGDIGKNADKYIKYGVEDIEARINELFKGTTTGRK</sequence>
<comment type="function">
    <text evidence="2 3 4">Component of an exocyst subcomplex specifically involved in autophagy-related, Golgi-independent membrane traffic to the vacuole. Regulates autophagosome formation and autophagy-related Golgi-independent import into the vacuole. Positive regulator of both abscisic acid (ABA)-promoted and mannitol (drought)-promoted stomatal closure (PubMed:27956469). Involved in the regulation of lateral root formation (PubMed:35249253).</text>
</comment>
<comment type="subunit">
    <text evidence="2 3 4">Interacts with EXO70B2, SEC5A and EXO84B (PubMed:23944713). Binds to PUB18 (PubMed:27956469). Binds directly to B1L at the plasma membrane and in small vesicles (PubMed:35249253).</text>
</comment>
<comment type="subcellular location">
    <subcellularLocation>
        <location evidence="2">Cytoplasmic vesicle</location>
        <location evidence="2">Phagosome</location>
    </subcellularLocation>
    <subcellularLocation>
        <location evidence="3">Endomembrane system</location>
    </subcellularLocation>
    <subcellularLocation>
        <location evidence="4">Cell membrane</location>
    </subcellularLocation>
    <subcellularLocation>
        <location evidence="4">Vesicle</location>
    </subcellularLocation>
    <text evidence="3">Displays a punctate pattern. Colocalizes with PUB18.</text>
</comment>
<comment type="PTM">
    <text evidence="3">Target of the E3 ubiquitin-protein ligase PUB18 that mediates its ubiquitination and degradation via the 26S proteasome.</text>
</comment>
<comment type="disruption phenotype">
    <text evidence="2 3 4">Twisted leaves with small spontaneous lesions, early yellowing of leaves and anthocyanin accumulation defects. Chlorotic shoots. Retarded growth with wrinkled rosette leaves under long-day growth conditions. Impaired abscisic acid (ABA)-mediated and mannitol (drought)-promoted stomatal closure (PubMed:27956469). Increased number of lateral roots (PubMed:35249253). Plants impaired for both B1L and EXO70B1 produce more lateral roots than single mutants (PubMed:35249253).</text>
</comment>
<comment type="similarity">
    <text evidence="6">Belongs to the EXO70 family.</text>
</comment>
<dbReference type="EMBL" id="AB025632">
    <property type="protein sequence ID" value="BAB10258.1"/>
    <property type="molecule type" value="Genomic_DNA"/>
</dbReference>
<dbReference type="EMBL" id="CP002688">
    <property type="protein sequence ID" value="AED97052.1"/>
    <property type="molecule type" value="Genomic_DNA"/>
</dbReference>
<dbReference type="EMBL" id="AY094480">
    <property type="protein sequence ID" value="AAM19847.1"/>
    <property type="molecule type" value="mRNA"/>
</dbReference>
<dbReference type="EMBL" id="BT000827">
    <property type="protein sequence ID" value="AAN33202.1"/>
    <property type="molecule type" value="mRNA"/>
</dbReference>
<dbReference type="RefSeq" id="NP_200651.1">
    <property type="nucleotide sequence ID" value="NM_125229.4"/>
</dbReference>
<dbReference type="SMR" id="Q9FGH9"/>
<dbReference type="BioGRID" id="21200">
    <property type="interactions" value="4"/>
</dbReference>
<dbReference type="FunCoup" id="Q9FGH9">
    <property type="interactions" value="3795"/>
</dbReference>
<dbReference type="IntAct" id="Q9FGH9">
    <property type="interactions" value="1"/>
</dbReference>
<dbReference type="STRING" id="3702.Q9FGH9"/>
<dbReference type="iPTMnet" id="Q9FGH9"/>
<dbReference type="PaxDb" id="3702-AT5G58430.1"/>
<dbReference type="ProteomicsDB" id="222036"/>
<dbReference type="EnsemblPlants" id="AT5G58430.1">
    <property type="protein sequence ID" value="AT5G58430.1"/>
    <property type="gene ID" value="AT5G58430"/>
</dbReference>
<dbReference type="GeneID" id="835956"/>
<dbReference type="Gramene" id="AT5G58430.1">
    <property type="protein sequence ID" value="AT5G58430.1"/>
    <property type="gene ID" value="AT5G58430"/>
</dbReference>
<dbReference type="KEGG" id="ath:AT5G58430"/>
<dbReference type="Araport" id="AT5G58430"/>
<dbReference type="TAIR" id="AT5G58430">
    <property type="gene designation" value="EXO70B1"/>
</dbReference>
<dbReference type="eggNOG" id="KOG2344">
    <property type="taxonomic scope" value="Eukaryota"/>
</dbReference>
<dbReference type="HOGENOM" id="CLU_010236_2_0_1"/>
<dbReference type="InParanoid" id="Q9FGH9"/>
<dbReference type="OMA" id="CYVFLMN"/>
<dbReference type="OrthoDB" id="1922221at2759"/>
<dbReference type="PhylomeDB" id="Q9FGH9"/>
<dbReference type="PRO" id="PR:Q9FGH9"/>
<dbReference type="Proteomes" id="UP000006548">
    <property type="component" value="Chromosome 5"/>
</dbReference>
<dbReference type="ExpressionAtlas" id="Q9FGH9">
    <property type="expression patterns" value="baseline and differential"/>
</dbReference>
<dbReference type="GO" id="GO:0005829">
    <property type="term" value="C:cytosol"/>
    <property type="evidence" value="ECO:0000314"/>
    <property type="project" value="TAIR"/>
</dbReference>
<dbReference type="GO" id="GO:0012505">
    <property type="term" value="C:endomembrane system"/>
    <property type="evidence" value="ECO:0007669"/>
    <property type="project" value="UniProtKB-SubCell"/>
</dbReference>
<dbReference type="GO" id="GO:0000145">
    <property type="term" value="C:exocyst"/>
    <property type="evidence" value="ECO:0000353"/>
    <property type="project" value="TAIR"/>
</dbReference>
<dbReference type="GO" id="GO:0070062">
    <property type="term" value="C:extracellular exosome"/>
    <property type="evidence" value="ECO:0000314"/>
    <property type="project" value="TAIR"/>
</dbReference>
<dbReference type="GO" id="GO:0045335">
    <property type="term" value="C:phagocytic vesicle"/>
    <property type="evidence" value="ECO:0007669"/>
    <property type="project" value="UniProtKB-SubCell"/>
</dbReference>
<dbReference type="GO" id="GO:0005886">
    <property type="term" value="C:plasma membrane"/>
    <property type="evidence" value="ECO:0000314"/>
    <property type="project" value="UniProtKB"/>
</dbReference>
<dbReference type="GO" id="GO:0031982">
    <property type="term" value="C:vesicle"/>
    <property type="evidence" value="ECO:0000314"/>
    <property type="project" value="UniProtKB"/>
</dbReference>
<dbReference type="GO" id="GO:0005546">
    <property type="term" value="F:phosphatidylinositol-4,5-bisphosphate binding"/>
    <property type="evidence" value="ECO:0007669"/>
    <property type="project" value="InterPro"/>
</dbReference>
<dbReference type="GO" id="GO:0006952">
    <property type="term" value="P:defense response"/>
    <property type="evidence" value="ECO:0000314"/>
    <property type="project" value="TAIR"/>
</dbReference>
<dbReference type="GO" id="GO:0052542">
    <property type="term" value="P:defense response by callose deposition"/>
    <property type="evidence" value="ECO:0000315"/>
    <property type="project" value="TAIR"/>
</dbReference>
<dbReference type="GO" id="GO:0042742">
    <property type="term" value="P:defense response to bacterium"/>
    <property type="evidence" value="ECO:0000315"/>
    <property type="project" value="TAIR"/>
</dbReference>
<dbReference type="GO" id="GO:0050832">
    <property type="term" value="P:defense response to fungus"/>
    <property type="evidence" value="ECO:0000315"/>
    <property type="project" value="TAIR"/>
</dbReference>
<dbReference type="GO" id="GO:0006887">
    <property type="term" value="P:exocytosis"/>
    <property type="evidence" value="ECO:0007669"/>
    <property type="project" value="InterPro"/>
</dbReference>
<dbReference type="GO" id="GO:0006955">
    <property type="term" value="P:immune response"/>
    <property type="evidence" value="ECO:0000315"/>
    <property type="project" value="TAIR"/>
</dbReference>
<dbReference type="GO" id="GO:1901332">
    <property type="term" value="P:negative regulation of lateral root development"/>
    <property type="evidence" value="ECO:0000315"/>
    <property type="project" value="UniProtKB"/>
</dbReference>
<dbReference type="GO" id="GO:0009789">
    <property type="term" value="P:positive regulation of abscisic acid-activated signaling pathway"/>
    <property type="evidence" value="ECO:0000315"/>
    <property type="project" value="UniProtKB"/>
</dbReference>
<dbReference type="GO" id="GO:0090333">
    <property type="term" value="P:regulation of stomatal closure"/>
    <property type="evidence" value="ECO:0000315"/>
    <property type="project" value="UniProtKB"/>
</dbReference>
<dbReference type="GO" id="GO:0009414">
    <property type="term" value="P:response to water deprivation"/>
    <property type="evidence" value="ECO:0000315"/>
    <property type="project" value="UniProtKB"/>
</dbReference>
<dbReference type="FunFam" id="1.20.1280.170:FF:000003">
    <property type="entry name" value="Exocyst subunit Exo70 family protein"/>
    <property type="match status" value="1"/>
</dbReference>
<dbReference type="Gene3D" id="1.20.1280.170">
    <property type="entry name" value="Exocyst complex component Exo70"/>
    <property type="match status" value="1"/>
</dbReference>
<dbReference type="InterPro" id="IPR016159">
    <property type="entry name" value="Cullin_repeat-like_dom_sf"/>
</dbReference>
<dbReference type="InterPro" id="IPR004140">
    <property type="entry name" value="Exo70"/>
</dbReference>
<dbReference type="InterPro" id="IPR046364">
    <property type="entry name" value="Exo70_C"/>
</dbReference>
<dbReference type="PANTHER" id="PTHR12542:SF96">
    <property type="entry name" value="EXOCYST COMPLEX COMPONENT EXO70B1"/>
    <property type="match status" value="1"/>
</dbReference>
<dbReference type="PANTHER" id="PTHR12542">
    <property type="entry name" value="EXOCYST COMPLEX PROTEIN EXO70"/>
    <property type="match status" value="1"/>
</dbReference>
<dbReference type="Pfam" id="PF03081">
    <property type="entry name" value="Exo70_C"/>
    <property type="match status" value="1"/>
</dbReference>
<dbReference type="Pfam" id="PF20669">
    <property type="entry name" value="Exo70_N"/>
    <property type="match status" value="1"/>
</dbReference>
<dbReference type="SUPFAM" id="SSF74788">
    <property type="entry name" value="Cullin repeat-like"/>
    <property type="match status" value="1"/>
</dbReference>
<feature type="chain" id="PRO_0000424566" description="Exocyst complex component EXO70B1">
    <location>
        <begin position="1"/>
        <end position="624"/>
    </location>
</feature>
<feature type="region of interest" description="Disordered" evidence="1">
    <location>
        <begin position="148"/>
        <end position="176"/>
    </location>
</feature>
<evidence type="ECO:0000256" key="1">
    <source>
        <dbReference type="SAM" id="MobiDB-lite"/>
    </source>
</evidence>
<evidence type="ECO:0000269" key="2">
    <source>
    </source>
</evidence>
<evidence type="ECO:0000269" key="3">
    <source>
    </source>
</evidence>
<evidence type="ECO:0000269" key="4">
    <source>
    </source>
</evidence>
<evidence type="ECO:0000303" key="5">
    <source>
    </source>
</evidence>
<evidence type="ECO:0000305" key="6"/>
<evidence type="ECO:0000312" key="7">
    <source>
        <dbReference type="Araport" id="AT5G58430"/>
    </source>
</evidence>
<evidence type="ECO:0000312" key="8">
    <source>
        <dbReference type="EMBL" id="BAB10258.1"/>
    </source>
</evidence>
<gene>
    <name evidence="5" type="primary">EXO70B1</name>
    <name evidence="7" type="ordered locus">At5g58430</name>
    <name evidence="8" type="ORF">MQJ2.3</name>
</gene>
<reference key="1">
    <citation type="submission" date="2011-04" db="EMBL/GenBank/DDBJ databases">
        <title>Structural analysis of Arabidopsis thaliana chromosome 5. XI.</title>
        <authorList>
            <person name="Kaneko T."/>
            <person name="Katoh T."/>
            <person name="Asamizu E."/>
            <person name="Sato S."/>
            <person name="Nakamura Y."/>
            <person name="Kotani H."/>
            <person name="Tabata S."/>
        </authorList>
    </citation>
    <scope>NUCLEOTIDE SEQUENCE [LARGE SCALE GENOMIC DNA]</scope>
    <source>
        <strain>cv. Columbia</strain>
    </source>
</reference>
<reference key="2">
    <citation type="journal article" date="2017" name="Plant J.">
        <title>Araport11: a complete reannotation of the Arabidopsis thaliana reference genome.</title>
        <authorList>
            <person name="Cheng C.Y."/>
            <person name="Krishnakumar V."/>
            <person name="Chan A.P."/>
            <person name="Thibaud-Nissen F."/>
            <person name="Schobel S."/>
            <person name="Town C.D."/>
        </authorList>
    </citation>
    <scope>GENOME REANNOTATION</scope>
    <source>
        <strain>cv. Columbia</strain>
    </source>
</reference>
<reference key="3">
    <citation type="journal article" date="2003" name="Science">
        <title>Empirical analysis of transcriptional activity in the Arabidopsis genome.</title>
        <authorList>
            <person name="Yamada K."/>
            <person name="Lim J."/>
            <person name="Dale J.M."/>
            <person name="Chen H."/>
            <person name="Shinn P."/>
            <person name="Palm C.J."/>
            <person name="Southwick A.M."/>
            <person name="Wu H.C."/>
            <person name="Kim C.J."/>
            <person name="Nguyen M."/>
            <person name="Pham P.K."/>
            <person name="Cheuk R.F."/>
            <person name="Karlin-Newmann G."/>
            <person name="Liu S.X."/>
            <person name="Lam B."/>
            <person name="Sakano H."/>
            <person name="Wu T."/>
            <person name="Yu G."/>
            <person name="Miranda M."/>
            <person name="Quach H.L."/>
            <person name="Tripp M."/>
            <person name="Chang C.H."/>
            <person name="Lee J.M."/>
            <person name="Toriumi M.J."/>
            <person name="Chan M.M."/>
            <person name="Tang C.C."/>
            <person name="Onodera C.S."/>
            <person name="Deng J.M."/>
            <person name="Akiyama K."/>
            <person name="Ansari Y."/>
            <person name="Arakawa T."/>
            <person name="Banh J."/>
            <person name="Banno F."/>
            <person name="Bowser L."/>
            <person name="Brooks S.Y."/>
            <person name="Carninci P."/>
            <person name="Chao Q."/>
            <person name="Choy N."/>
            <person name="Enju A."/>
            <person name="Goldsmith A.D."/>
            <person name="Gurjal M."/>
            <person name="Hansen N.F."/>
            <person name="Hayashizaki Y."/>
            <person name="Johnson-Hopson C."/>
            <person name="Hsuan V.W."/>
            <person name="Iida K."/>
            <person name="Karnes M."/>
            <person name="Khan S."/>
            <person name="Koesema E."/>
            <person name="Ishida J."/>
            <person name="Jiang P.X."/>
            <person name="Jones T."/>
            <person name="Kawai J."/>
            <person name="Kamiya A."/>
            <person name="Meyers C."/>
            <person name="Nakajima M."/>
            <person name="Narusaka M."/>
            <person name="Seki M."/>
            <person name="Sakurai T."/>
            <person name="Satou M."/>
            <person name="Tamse R."/>
            <person name="Vaysberg M."/>
            <person name="Wallender E.K."/>
            <person name="Wong C."/>
            <person name="Yamamura Y."/>
            <person name="Yuan S."/>
            <person name="Shinozaki K."/>
            <person name="Davis R.W."/>
            <person name="Theologis A."/>
            <person name="Ecker J.R."/>
        </authorList>
    </citation>
    <scope>NUCLEOTIDE SEQUENCE [LARGE SCALE MRNA]</scope>
    <source>
        <strain>cv. Columbia</strain>
    </source>
</reference>
<reference key="4">
    <citation type="journal article" date="2013" name="Traffic">
        <title>Arabidopsis exocyst subcomplex containing subunit EXO70B1 is involved in the autophagy-related transport to the vacuole.</title>
        <authorList>
            <person name="Kulich I."/>
            <person name="Pecenkova T."/>
            <person name="Sekeres J."/>
            <person name="Smetana O."/>
            <person name="Fendrych M."/>
            <person name="Foissner I."/>
            <person name="Hoeftberger M."/>
            <person name="Zarsky V."/>
        </authorList>
    </citation>
    <scope>FUNCTION</scope>
    <scope>INTERACTION WITH EXO70B2; SEC5A AND EXO84B</scope>
    <scope>SUBCELLULAR LOCATION</scope>
    <scope>DISRUPTION PHENOTYPE</scope>
    <source>
        <strain>cv. Columbia</strain>
    </source>
</reference>
<reference key="5">
    <citation type="journal article" date="2016" name="Plant Cell">
        <title>The N-terminal UND motif of the Arabidopsis U-box E3 ligase PUB18 is critical for the negative regulation of ABA-mediated stomatal movement and determines its ubiquitination specificity for exocyst subunit Exo70B1.</title>
        <authorList>
            <person name="Seo D.H."/>
            <person name="Ahn M.Y."/>
            <person name="Park K.Y."/>
            <person name="Kim E.Y."/>
            <person name="Kim W.T."/>
        </authorList>
    </citation>
    <scope>FUNCTION</scope>
    <scope>DISRUPTION PHENOTYPE</scope>
    <scope>INTERACTION WITH PUB18</scope>
    <scope>REGULATION BY PUB18</scope>
    <scope>SUBCELLULAR LOCATION</scope>
    <source>
        <strain>cv. Columbia</strain>
    </source>
</reference>
<reference key="6">
    <citation type="journal article" date="2022" name="J. Integr. Plant Biol.">
        <title>BYPASS1-LIKE regulates lateral root initiation via exocytic vesicular trafficking-mediated PIN recycling in Arabidopsis.</title>
        <authorList>
            <person name="Yang G."/>
            <person name="Chen B.-X."/>
            <person name="Chen T."/>
            <person name="Chen J.-H."/>
            <person name="Lin X.-Y."/>
            <person name="Yue X.-L."/>
            <person name="An L.-Z."/>
            <person name="Zhang H."/>
        </authorList>
    </citation>
    <scope>FUNCTION</scope>
    <scope>DISRUPTION PHENOTYPE</scope>
    <scope>INTERACTION WITH B1L</scope>
    <scope>SUBCELLULAR LOCATION</scope>
    <source>
        <strain>cv. Columbia</strain>
    </source>
</reference>
<accession>Q9FGH9</accession>
<name>E70B1_ARATH</name>
<protein>
    <recommendedName>
        <fullName evidence="5">Exocyst complex component EXO70B1</fullName>
        <shortName evidence="5">AtExo70b1</shortName>
    </recommendedName>
    <alternativeName>
        <fullName evidence="5">Exocyst subunit Exo70 family protein B1</fullName>
    </alternativeName>
</protein>